<proteinExistence type="inferred from homology"/>
<name>MELT_CAEBR</name>
<reference key="1">
    <citation type="journal article" date="2003" name="PLoS Biol.">
        <title>The genome sequence of Caenorhabditis briggsae: a platform for comparative genomics.</title>
        <authorList>
            <person name="Stein L.D."/>
            <person name="Bao Z."/>
            <person name="Blasiar D."/>
            <person name="Blumenthal T."/>
            <person name="Brent M.R."/>
            <person name="Chen N."/>
            <person name="Chinwalla A."/>
            <person name="Clarke L."/>
            <person name="Clee C."/>
            <person name="Coghlan A."/>
            <person name="Coulson A."/>
            <person name="D'Eustachio P."/>
            <person name="Fitch D.H.A."/>
            <person name="Fulton L.A."/>
            <person name="Fulton R.E."/>
            <person name="Griffiths-Jones S."/>
            <person name="Harris T.W."/>
            <person name="Hillier L.W."/>
            <person name="Kamath R."/>
            <person name="Kuwabara P.E."/>
            <person name="Mardis E.R."/>
            <person name="Marra M.A."/>
            <person name="Miner T.L."/>
            <person name="Minx P."/>
            <person name="Mullikin J.C."/>
            <person name="Plumb R.W."/>
            <person name="Rogers J."/>
            <person name="Schein J.E."/>
            <person name="Sohrmann M."/>
            <person name="Spieth J."/>
            <person name="Stajich J.E."/>
            <person name="Wei C."/>
            <person name="Willey D."/>
            <person name="Wilson R.K."/>
            <person name="Durbin R.M."/>
            <person name="Waterston R.H."/>
        </authorList>
    </citation>
    <scope>NUCLEOTIDE SEQUENCE [LARGE SCALE GENOMIC DNA]</scope>
    <source>
        <strain>AF16</strain>
    </source>
</reference>
<comment type="subcellular location">
    <subcellularLocation>
        <location evidence="1">Cell membrane</location>
        <topology evidence="1">Peripheral membrane protein</topology>
        <orientation evidence="1">Cytoplasmic side</orientation>
    </subcellularLocation>
</comment>
<comment type="domain">
    <text evidence="1">The PH domain is required for membrane targeting.</text>
</comment>
<comment type="similarity">
    <text evidence="4">Belongs to the MELT/VEPH family.</text>
</comment>
<keyword id="KW-1003">Cell membrane</keyword>
<keyword id="KW-0472">Membrane</keyword>
<keyword id="KW-1185">Reference proteome</keyword>
<dbReference type="EMBL" id="HE600960">
    <property type="protein sequence ID" value="CAP27359.2"/>
    <property type="molecule type" value="Genomic_DNA"/>
</dbReference>
<dbReference type="RefSeq" id="XP_045093422.1">
    <property type="nucleotide sequence ID" value="XM_045243241.1"/>
</dbReference>
<dbReference type="FunCoup" id="Q61QK6">
    <property type="interactions" value="72"/>
</dbReference>
<dbReference type="EnsemblMetazoa" id="CBG06982.1">
    <property type="protein sequence ID" value="CBG06982.1"/>
    <property type="gene ID" value="WBGene00029160"/>
</dbReference>
<dbReference type="GeneID" id="8574124"/>
<dbReference type="WormBase" id="CBG06982">
    <property type="protein sequence ID" value="CBP31805"/>
    <property type="gene ID" value="WBGene00029160"/>
</dbReference>
<dbReference type="eggNOG" id="KOG3723">
    <property type="taxonomic scope" value="Eukaryota"/>
</dbReference>
<dbReference type="HOGENOM" id="CLU_010394_0_0_1"/>
<dbReference type="InParanoid" id="Q61QK6"/>
<dbReference type="OMA" id="WIRIMLL"/>
<dbReference type="OrthoDB" id="5869902at2759"/>
<dbReference type="Proteomes" id="UP000008549">
    <property type="component" value="Unassembled WGS sequence"/>
</dbReference>
<dbReference type="GO" id="GO:0005886">
    <property type="term" value="C:plasma membrane"/>
    <property type="evidence" value="ECO:0000318"/>
    <property type="project" value="GO_Central"/>
</dbReference>
<dbReference type="GO" id="GO:0010314">
    <property type="term" value="F:phosphatidylinositol-5-phosphate binding"/>
    <property type="evidence" value="ECO:0000318"/>
    <property type="project" value="GO_Central"/>
</dbReference>
<dbReference type="GO" id="GO:0009966">
    <property type="term" value="P:regulation of signal transduction"/>
    <property type="evidence" value="ECO:0000318"/>
    <property type="project" value="GO_Central"/>
</dbReference>
<dbReference type="Gene3D" id="1.25.10.10">
    <property type="entry name" value="Leucine-rich Repeat Variant"/>
    <property type="match status" value="1"/>
</dbReference>
<dbReference type="Gene3D" id="2.30.29.30">
    <property type="entry name" value="Pleckstrin-homology domain (PH domain)/Phosphotyrosine-binding domain (PTB)"/>
    <property type="match status" value="1"/>
</dbReference>
<dbReference type="InterPro" id="IPR011989">
    <property type="entry name" value="ARM-like"/>
</dbReference>
<dbReference type="InterPro" id="IPR016024">
    <property type="entry name" value="ARM-type_fold"/>
</dbReference>
<dbReference type="InterPro" id="IPR039888">
    <property type="entry name" value="Melted-like"/>
</dbReference>
<dbReference type="InterPro" id="IPR011993">
    <property type="entry name" value="PH-like_dom_sf"/>
</dbReference>
<dbReference type="InterPro" id="IPR001849">
    <property type="entry name" value="PH_domain"/>
</dbReference>
<dbReference type="PANTHER" id="PTHR21630:SF10">
    <property type="entry name" value="VENTRICULAR ZONE-EXPRESSED PH DOMAIN-CONTAINING PROTEIN HOMOLOG 1"/>
    <property type="match status" value="1"/>
</dbReference>
<dbReference type="PANTHER" id="PTHR21630">
    <property type="entry name" value="VEPH-A/MELTED"/>
    <property type="match status" value="1"/>
</dbReference>
<dbReference type="Pfam" id="PF00169">
    <property type="entry name" value="PH"/>
    <property type="match status" value="1"/>
</dbReference>
<dbReference type="SMART" id="SM00233">
    <property type="entry name" value="PH"/>
    <property type="match status" value="1"/>
</dbReference>
<dbReference type="SUPFAM" id="SSF48371">
    <property type="entry name" value="ARM repeat"/>
    <property type="match status" value="1"/>
</dbReference>
<dbReference type="SUPFAM" id="SSF50729">
    <property type="entry name" value="PH domain-like"/>
    <property type="match status" value="1"/>
</dbReference>
<dbReference type="PROSITE" id="PS50003">
    <property type="entry name" value="PH_DOMAIN"/>
    <property type="match status" value="1"/>
</dbReference>
<accession>Q61QK6</accession>
<accession>A8X3Z9</accession>
<protein>
    <recommendedName>
        <fullName>Protein melted homolog</fullName>
    </recommendedName>
</protein>
<sequence length="867" mass="97661">MHYLLSRLLHQRQLNASAQLFNVSHYDVITDMSNTFTCLKEIINDPTYPFNKVDQSVVEIVIARLTAAIRETGSIESYAAELVDVLDEVLKHPMTTLNEKSRDVDSPHCKIASDLLSSLFLHYGKKSVMTLTIPVALKCLNSENAELVKNTTSYISLAAIHNGKSLSSHALQIITKVVKGNYSLIRVLPHIYQDNKEPFHAQLSQLIDLLQNQEVDCSEKLSLLQLASMVANTKPEVLIPYLPRFDVYLLSPQLSTALLNIYMSLISQNRTKALSQFLPTLKLAAQSNEFVNNRTTICKIIANIGRVSSTLASEAVDELVLMARHNLAEPQLLQSVLNEIEAIGSMYPTSLRRHVAFFQTLPSSRTIERILGHLNLNNENIPLEVKKQSTESLLSKNSKVFGNLITSGGRTVFEVCESPTVELCELDRNTHSLAMQYQNNRSSGSLSRRSHASIAHSLGAGTHGPYSDINESRELSMISMPSSSRTNVHLSQAASSSRGHSLPQTFSPQAMTQIQMGKDGRVRPVAGGRRPVQWPAGSTETTFPAHLGPVTTSKMCALNEEDEKWINSDRNDVVYKFVEHRKNKIRRYIGEVNTRFPIPVQCTVEGSKSSKHRMVIHFSCQTRSSPCCVFTKEYLFAFKTKYPAFWLHFMFLQMECSAITQFGEVAGKDSQQYQTLEHCWKCLPSSTTKNVLFDTMITAAFPNSKDQDKLIKELDEAGFFAYFTMDSSNNMWNCISCTNPEKVKYFVEEGGVEKVLEGQLKEKKGRWRFLKRWNTKYFTLSSAALNYSTQHMPTDSRALLPSIDLRSIRSVRSLGRGKKARKSLRKAFEIFTADNTSMILKAKDEKNAEEWLHCLQIAMAHARRELS</sequence>
<gene>
    <name type="ORF">CBG06982</name>
</gene>
<feature type="chain" id="PRO_0000297959" description="Protein melted homolog">
    <location>
        <begin position="1"/>
        <end position="867"/>
    </location>
</feature>
<feature type="domain" description="PH" evidence="2">
    <location>
        <begin position="753"/>
        <end position="860"/>
    </location>
</feature>
<feature type="region of interest" description="Disordered" evidence="3">
    <location>
        <begin position="480"/>
        <end position="505"/>
    </location>
</feature>
<evidence type="ECO:0000250" key="1"/>
<evidence type="ECO:0000255" key="2">
    <source>
        <dbReference type="PROSITE-ProRule" id="PRU00145"/>
    </source>
</evidence>
<evidence type="ECO:0000256" key="3">
    <source>
        <dbReference type="SAM" id="MobiDB-lite"/>
    </source>
</evidence>
<evidence type="ECO:0000305" key="4"/>
<organism>
    <name type="scientific">Caenorhabditis briggsae</name>
    <dbReference type="NCBI Taxonomy" id="6238"/>
    <lineage>
        <taxon>Eukaryota</taxon>
        <taxon>Metazoa</taxon>
        <taxon>Ecdysozoa</taxon>
        <taxon>Nematoda</taxon>
        <taxon>Chromadorea</taxon>
        <taxon>Rhabditida</taxon>
        <taxon>Rhabditina</taxon>
        <taxon>Rhabditomorpha</taxon>
        <taxon>Rhabditoidea</taxon>
        <taxon>Rhabditidae</taxon>
        <taxon>Peloderinae</taxon>
        <taxon>Caenorhabditis</taxon>
    </lineage>
</organism>